<evidence type="ECO:0000255" key="1">
    <source>
        <dbReference type="HAMAP-Rule" id="MF_00258"/>
    </source>
</evidence>
<sequence length="267" mass="30204">MRFSIQPTILFFDSGVGGLSVYKETKQLLPDCHYLYCFDNGFFPYSEKDEKDIIDRTLRICQKINQAYPLDLIVIACNTASTVVLPELRRNFSIPIVGTVPAIKPAAEMSETKHIGLIATKGTIKRTYVNDLIKNYAHHCMVEKIGSTKLVEIAEQKLRGGEVDLNVLKQELSPWQTMKSLDSVVLGCTHFPLIKEEIECCLPQVKFFVSSGKAIAKRVKFLLKGIEVRSKIQKKNLIFCTKPLEDDKSVQQILDFGEFENLVILSE</sequence>
<keyword id="KW-0133">Cell shape</keyword>
<keyword id="KW-0961">Cell wall biogenesis/degradation</keyword>
<keyword id="KW-0413">Isomerase</keyword>
<keyword id="KW-0573">Peptidoglycan synthesis</keyword>
<protein>
    <recommendedName>
        <fullName evidence="1">Glutamate racemase</fullName>
        <ecNumber evidence="1">5.1.1.3</ecNumber>
    </recommendedName>
</protein>
<organism>
    <name type="scientific">Histophilus somni (strain 129Pt)</name>
    <name type="common">Haemophilus somnus</name>
    <dbReference type="NCBI Taxonomy" id="205914"/>
    <lineage>
        <taxon>Bacteria</taxon>
        <taxon>Pseudomonadati</taxon>
        <taxon>Pseudomonadota</taxon>
        <taxon>Gammaproteobacteria</taxon>
        <taxon>Pasteurellales</taxon>
        <taxon>Pasteurellaceae</taxon>
        <taxon>Histophilus</taxon>
    </lineage>
</organism>
<accession>Q0I5M2</accession>
<proteinExistence type="inferred from homology"/>
<comment type="function">
    <text evidence="1">Provides the (R)-glutamate required for cell wall biosynthesis.</text>
</comment>
<comment type="catalytic activity">
    <reaction evidence="1">
        <text>L-glutamate = D-glutamate</text>
        <dbReference type="Rhea" id="RHEA:12813"/>
        <dbReference type="ChEBI" id="CHEBI:29985"/>
        <dbReference type="ChEBI" id="CHEBI:29986"/>
        <dbReference type="EC" id="5.1.1.3"/>
    </reaction>
</comment>
<comment type="pathway">
    <text evidence="1">Cell wall biogenesis; peptidoglycan biosynthesis.</text>
</comment>
<comment type="similarity">
    <text evidence="1">Belongs to the aspartate/glutamate racemases family.</text>
</comment>
<gene>
    <name evidence="1" type="primary">murI</name>
    <name type="ordered locus">HS_1453</name>
</gene>
<feature type="chain" id="PRO_1000047571" description="Glutamate racemase">
    <location>
        <begin position="1"/>
        <end position="267"/>
    </location>
</feature>
<feature type="active site" description="Proton donor/acceptor" evidence="1">
    <location>
        <position position="77"/>
    </location>
</feature>
<feature type="active site" description="Proton donor/acceptor" evidence="1">
    <location>
        <position position="188"/>
    </location>
</feature>
<feature type="binding site" evidence="1">
    <location>
        <begin position="13"/>
        <end position="14"/>
    </location>
    <ligand>
        <name>substrate</name>
    </ligand>
</feature>
<feature type="binding site" evidence="1">
    <location>
        <begin position="45"/>
        <end position="46"/>
    </location>
    <ligand>
        <name>substrate</name>
    </ligand>
</feature>
<feature type="binding site" evidence="1">
    <location>
        <begin position="78"/>
        <end position="79"/>
    </location>
    <ligand>
        <name>substrate</name>
    </ligand>
</feature>
<feature type="binding site" evidence="1">
    <location>
        <begin position="189"/>
        <end position="190"/>
    </location>
    <ligand>
        <name>substrate</name>
    </ligand>
</feature>
<reference key="1">
    <citation type="journal article" date="2007" name="J. Bacteriol.">
        <title>Complete genome sequence of Haemophilus somnus (Histophilus somni) strain 129Pt and comparison to Haemophilus ducreyi 35000HP and Haemophilus influenzae Rd.</title>
        <authorList>
            <person name="Challacombe J.F."/>
            <person name="Duncan A.J."/>
            <person name="Brettin T.S."/>
            <person name="Bruce D."/>
            <person name="Chertkov O."/>
            <person name="Detter J.C."/>
            <person name="Han C.S."/>
            <person name="Misra M."/>
            <person name="Richardson P."/>
            <person name="Tapia R."/>
            <person name="Thayer N."/>
            <person name="Xie G."/>
            <person name="Inzana T.J."/>
        </authorList>
    </citation>
    <scope>NUCLEOTIDE SEQUENCE [LARGE SCALE GENOMIC DNA]</scope>
    <source>
        <strain>129Pt</strain>
    </source>
</reference>
<name>MURI_HISS1</name>
<dbReference type="EC" id="5.1.1.3" evidence="1"/>
<dbReference type="EMBL" id="CP000436">
    <property type="protein sequence ID" value="ABI25728.1"/>
    <property type="molecule type" value="Genomic_DNA"/>
</dbReference>
<dbReference type="SMR" id="Q0I5M2"/>
<dbReference type="KEGG" id="hso:HS_1453"/>
<dbReference type="eggNOG" id="COG0796">
    <property type="taxonomic scope" value="Bacteria"/>
</dbReference>
<dbReference type="HOGENOM" id="CLU_052344_2_0_6"/>
<dbReference type="UniPathway" id="UPA00219"/>
<dbReference type="GO" id="GO:0008881">
    <property type="term" value="F:glutamate racemase activity"/>
    <property type="evidence" value="ECO:0007669"/>
    <property type="project" value="UniProtKB-UniRule"/>
</dbReference>
<dbReference type="GO" id="GO:0071555">
    <property type="term" value="P:cell wall organization"/>
    <property type="evidence" value="ECO:0007669"/>
    <property type="project" value="UniProtKB-KW"/>
</dbReference>
<dbReference type="GO" id="GO:0009252">
    <property type="term" value="P:peptidoglycan biosynthetic process"/>
    <property type="evidence" value="ECO:0007669"/>
    <property type="project" value="UniProtKB-UniRule"/>
</dbReference>
<dbReference type="GO" id="GO:0008360">
    <property type="term" value="P:regulation of cell shape"/>
    <property type="evidence" value="ECO:0007669"/>
    <property type="project" value="UniProtKB-KW"/>
</dbReference>
<dbReference type="FunFam" id="3.40.50.1860:FF:000001">
    <property type="entry name" value="Glutamate racemase"/>
    <property type="match status" value="1"/>
</dbReference>
<dbReference type="Gene3D" id="3.40.50.1860">
    <property type="match status" value="2"/>
</dbReference>
<dbReference type="HAMAP" id="MF_00258">
    <property type="entry name" value="Glu_racemase"/>
    <property type="match status" value="1"/>
</dbReference>
<dbReference type="InterPro" id="IPR015942">
    <property type="entry name" value="Asp/Glu/hydantoin_racemase"/>
</dbReference>
<dbReference type="InterPro" id="IPR001920">
    <property type="entry name" value="Asp/Glu_race"/>
</dbReference>
<dbReference type="InterPro" id="IPR018187">
    <property type="entry name" value="Asp/Glu_racemase_AS_1"/>
</dbReference>
<dbReference type="InterPro" id="IPR033134">
    <property type="entry name" value="Asp/Glu_racemase_AS_2"/>
</dbReference>
<dbReference type="InterPro" id="IPR004391">
    <property type="entry name" value="Glu_race"/>
</dbReference>
<dbReference type="NCBIfam" id="TIGR00067">
    <property type="entry name" value="glut_race"/>
    <property type="match status" value="1"/>
</dbReference>
<dbReference type="PANTHER" id="PTHR21198">
    <property type="entry name" value="GLUTAMATE RACEMASE"/>
    <property type="match status" value="1"/>
</dbReference>
<dbReference type="PANTHER" id="PTHR21198:SF2">
    <property type="entry name" value="GLUTAMATE RACEMASE"/>
    <property type="match status" value="1"/>
</dbReference>
<dbReference type="Pfam" id="PF01177">
    <property type="entry name" value="Asp_Glu_race"/>
    <property type="match status" value="1"/>
</dbReference>
<dbReference type="SUPFAM" id="SSF53681">
    <property type="entry name" value="Aspartate/glutamate racemase"/>
    <property type="match status" value="2"/>
</dbReference>
<dbReference type="PROSITE" id="PS00923">
    <property type="entry name" value="ASP_GLU_RACEMASE_1"/>
    <property type="match status" value="1"/>
</dbReference>
<dbReference type="PROSITE" id="PS00924">
    <property type="entry name" value="ASP_GLU_RACEMASE_2"/>
    <property type="match status" value="1"/>
</dbReference>